<accession>P75496</accession>
<proteinExistence type="inferred from homology"/>
<organism>
    <name type="scientific">Mycoplasma pneumoniae (strain ATCC 29342 / M129 / Subtype 1)</name>
    <name type="common">Mycoplasmoides pneumoniae</name>
    <dbReference type="NCBI Taxonomy" id="272634"/>
    <lineage>
        <taxon>Bacteria</taxon>
        <taxon>Bacillati</taxon>
        <taxon>Mycoplasmatota</taxon>
        <taxon>Mycoplasmoidales</taxon>
        <taxon>Mycoplasmoidaceae</taxon>
        <taxon>Mycoplasmoides</taxon>
    </lineage>
</organism>
<protein>
    <recommendedName>
        <fullName>Uncharacterized lipoprotein MPN_281</fullName>
    </recommendedName>
</protein>
<feature type="signal peptide" evidence="1">
    <location>
        <begin position="1"/>
        <end position="22"/>
    </location>
</feature>
<feature type="chain" id="PRO_0000018729" description="Uncharacterized lipoprotein MPN_281">
    <location>
        <begin position="23"/>
        <end position="377"/>
    </location>
</feature>
<feature type="region of interest" description="Disordered" evidence="2">
    <location>
        <begin position="217"/>
        <end position="260"/>
    </location>
</feature>
<feature type="compositionally biased region" description="Basic and acidic residues" evidence="2">
    <location>
        <begin position="251"/>
        <end position="260"/>
    </location>
</feature>
<feature type="lipid moiety-binding region" description="N-palmitoyl cysteine" evidence="1">
    <location>
        <position position="23"/>
    </location>
</feature>
<feature type="lipid moiety-binding region" description="S-diacylglycerol cysteine" evidence="1">
    <location>
        <position position="23"/>
    </location>
</feature>
<gene>
    <name type="ordered locus">MPN_281</name>
    <name type="ORF">A65_orf377</name>
    <name type="ORF">MP554</name>
</gene>
<reference key="1">
    <citation type="journal article" date="1996" name="Nucleic Acids Res.">
        <title>Complete sequence analysis of the genome of the bacterium Mycoplasma pneumoniae.</title>
        <authorList>
            <person name="Himmelreich R."/>
            <person name="Hilbert H."/>
            <person name="Plagens H."/>
            <person name="Pirkl E."/>
            <person name="Li B.-C."/>
            <person name="Herrmann R."/>
        </authorList>
    </citation>
    <scope>NUCLEOTIDE SEQUENCE [LARGE SCALE GENOMIC DNA]</scope>
    <source>
        <strain>ATCC 29342 / M129 / Subtype 1</strain>
    </source>
</reference>
<comment type="subcellular location">
    <subcellularLocation>
        <location evidence="1">Cell membrane</location>
        <topology evidence="1">Lipid-anchor</topology>
    </subcellularLocation>
</comment>
<comment type="similarity">
    <text evidence="3">Belongs to the MG185/MG260 family.</text>
</comment>
<keyword id="KW-1003">Cell membrane</keyword>
<keyword id="KW-0449">Lipoprotein</keyword>
<keyword id="KW-0472">Membrane</keyword>
<keyword id="KW-0564">Palmitate</keyword>
<keyword id="KW-1185">Reference proteome</keyword>
<keyword id="KW-0732">Signal</keyword>
<evidence type="ECO:0000255" key="1">
    <source>
        <dbReference type="PROSITE-ProRule" id="PRU00303"/>
    </source>
</evidence>
<evidence type="ECO:0000256" key="2">
    <source>
        <dbReference type="SAM" id="MobiDB-lite"/>
    </source>
</evidence>
<evidence type="ECO:0000305" key="3"/>
<dbReference type="EMBL" id="U00089">
    <property type="protein sequence ID" value="AAB96202.1"/>
    <property type="molecule type" value="Genomic_DNA"/>
</dbReference>
<dbReference type="PIR" id="S73880">
    <property type="entry name" value="S73880"/>
</dbReference>
<dbReference type="IntAct" id="P75496">
    <property type="interactions" value="1"/>
</dbReference>
<dbReference type="STRING" id="272634.MPN_281"/>
<dbReference type="EnsemblBacteria" id="AAB96202">
    <property type="protein sequence ID" value="AAB96202"/>
    <property type="gene ID" value="MPN_281"/>
</dbReference>
<dbReference type="KEGG" id="mpn:MPN_281"/>
<dbReference type="HOGENOM" id="CLU_017227_0_0_14"/>
<dbReference type="Proteomes" id="UP000000808">
    <property type="component" value="Chromosome"/>
</dbReference>
<dbReference type="GO" id="GO:0005886">
    <property type="term" value="C:plasma membrane"/>
    <property type="evidence" value="ECO:0007669"/>
    <property type="project" value="UniProtKB-SubCell"/>
</dbReference>
<dbReference type="InterPro" id="IPR004984">
    <property type="entry name" value="Mycoplasma_lipoprotein_cen_dom"/>
</dbReference>
<dbReference type="Pfam" id="PF03305">
    <property type="entry name" value="Lipoprotein_X"/>
    <property type="match status" value="1"/>
</dbReference>
<dbReference type="PROSITE" id="PS51257">
    <property type="entry name" value="PROKAR_LIPOPROTEIN"/>
    <property type="match status" value="1"/>
</dbReference>
<name>Y281_MYCPN</name>
<sequence length="377" mass="41454">MKFKYGTVVLGSFLGLSVVLAACGARGKFDQFDDGKIKLASSLTSKAAANALQTIIEKYNIVKSGKDYPIEITQIAGGYDGGRTDLQTRVSVKDKTNFYNLILNYPDLVSVLARSGMELLFDKVNVDKLEPNFLKFNEQISGVAKSGNYGIPVSLSTDILVLNGPVLHYILNSAKKEEANSQVKSQIKTSQIQAKGSLTIDTDENTKSLWEKIQNSAKANGETNQKGRKAAKSNKTALVQLKNGADTTTNEENKDTKTSDDKVKQTWGDYVEKDDGLKNYTFRASVFENWHDFLDFSTRVAKSFTEKVSNITNKKGTDIQGVLGVDSSPNVLFASVFAAGGGNYENFFYKLKDGRADFSNFKNKGSSYQNLQSVFKD</sequence>